<accession>O35417</accession>
<keyword id="KW-0165">Cleavage on pair of basic residues</keyword>
<keyword id="KW-1015">Disulfide bond</keyword>
<keyword id="KW-0257">Endorphin</keyword>
<keyword id="KW-0527">Neuropeptide</keyword>
<keyword id="KW-0529">Neurotransmitter</keyword>
<keyword id="KW-0555">Opioid peptide</keyword>
<keyword id="KW-1185">Reference proteome</keyword>
<keyword id="KW-0964">Secreted</keyword>
<keyword id="KW-0732">Signal</keyword>
<gene>
    <name type="primary">Pdyn</name>
</gene>
<comment type="function">
    <text evidence="1">Leu-enkephalins compete with and mimic the effects of opiate drugs. They play a role in a number of physiologic functions, including pain perception and responses to stress (By similarity).</text>
</comment>
<comment type="function">
    <text evidence="1">Dynorphin peptides differentially regulate the kappa opioid receptor. Dynorphin A(1-13) has a typical opioid activity, it is 700 times more potent than Leu-enkephalin (By similarity).</text>
</comment>
<comment type="function">
    <text evidence="1">Leumorphin has a typical opioid activity and may have anti-apoptotic effect.</text>
</comment>
<comment type="subcellular location">
    <subcellularLocation>
        <location>Secreted</location>
    </subcellularLocation>
</comment>
<comment type="PTM">
    <text>The N-terminal domain contains 6 conserved cysteines thought to be involved in disulfide bonding and/or processing.</text>
</comment>
<comment type="similarity">
    <text evidence="4">Belongs to the opioid neuropeptide precursor family.</text>
</comment>
<feature type="signal peptide" evidence="2">
    <location>
        <begin position="1"/>
        <end position="21"/>
    </location>
</feature>
<feature type="propeptide" id="PRO_0000008183">
    <location>
        <begin position="22"/>
        <end position="163"/>
    </location>
</feature>
<feature type="peptide" id="PRO_0000306353" description="Alpha-neoendorphin">
    <location>
        <begin position="166"/>
        <end position="175"/>
    </location>
</feature>
<feature type="peptide" id="PRO_0000008184" description="Beta-neoendorphin">
    <location>
        <begin position="166"/>
        <end position="174"/>
    </location>
</feature>
<feature type="peptide" id="PRO_0000008185" description="Leu-enkephalin">
    <location>
        <begin position="166"/>
        <end position="170"/>
    </location>
</feature>
<feature type="propeptide" id="PRO_0000008186">
    <location>
        <begin position="177"/>
        <end position="199"/>
    </location>
</feature>
<feature type="peptide" id="PRO_0000306354" description="Big dynorphin">
    <location>
        <begin position="202"/>
        <end position="233"/>
    </location>
</feature>
<feature type="peptide" id="PRO_0000008187" description="Dynorphin A(1-17)">
    <location>
        <begin position="202"/>
        <end position="218"/>
    </location>
</feature>
<feature type="peptide" id="PRO_0000306355" description="Dynorphin A(1-13)" evidence="1">
    <location>
        <begin position="202"/>
        <end position="214"/>
    </location>
</feature>
<feature type="peptide" id="PRO_0000306356" description="Dynorphin A(1-8)" evidence="1">
    <location>
        <begin position="202"/>
        <end position="209"/>
    </location>
</feature>
<feature type="peptide" id="PRO_0000008188" description="Leu-enkephalin">
    <location>
        <begin position="202"/>
        <end position="206"/>
    </location>
</feature>
<feature type="peptide" id="PRO_0000008189" description="Leumorphin">
    <location>
        <begin position="221"/>
        <end position="248"/>
    </location>
</feature>
<feature type="peptide" id="PRO_0000306357" description="Rimorphin" evidence="1">
    <location>
        <begin position="221"/>
        <end position="233"/>
    </location>
</feature>
<feature type="peptide" id="PRO_0000008190" description="Leu-enkephalin">
    <location>
        <begin position="221"/>
        <end position="225"/>
    </location>
</feature>
<feature type="region of interest" description="Disordered" evidence="3">
    <location>
        <begin position="175"/>
        <end position="195"/>
    </location>
</feature>
<feature type="compositionally biased region" description="Basic and acidic residues" evidence="3">
    <location>
        <begin position="176"/>
        <end position="185"/>
    </location>
</feature>
<organism>
    <name type="scientific">Mus musculus</name>
    <name type="common">Mouse</name>
    <dbReference type="NCBI Taxonomy" id="10090"/>
    <lineage>
        <taxon>Eukaryota</taxon>
        <taxon>Metazoa</taxon>
        <taxon>Chordata</taxon>
        <taxon>Craniata</taxon>
        <taxon>Vertebrata</taxon>
        <taxon>Euteleostomi</taxon>
        <taxon>Mammalia</taxon>
        <taxon>Eutheria</taxon>
        <taxon>Euarchontoglires</taxon>
        <taxon>Glires</taxon>
        <taxon>Rodentia</taxon>
        <taxon>Myomorpha</taxon>
        <taxon>Muroidea</taxon>
        <taxon>Muridae</taxon>
        <taxon>Murinae</taxon>
        <taxon>Mus</taxon>
        <taxon>Mus</taxon>
    </lineage>
</organism>
<dbReference type="EMBL" id="AF026537">
    <property type="protein sequence ID" value="AAB82584.1"/>
    <property type="molecule type" value="mRNA"/>
</dbReference>
<dbReference type="CCDS" id="CCDS38239.1"/>
<dbReference type="BMRB" id="O35417"/>
<dbReference type="FunCoup" id="O35417">
    <property type="interactions" value="161"/>
</dbReference>
<dbReference type="STRING" id="10090.ENSMUSP00000028883"/>
<dbReference type="iPTMnet" id="O35417"/>
<dbReference type="PhosphoSitePlus" id="O35417"/>
<dbReference type="PaxDb" id="10090-ENSMUSP00000028883"/>
<dbReference type="ProteomicsDB" id="287663"/>
<dbReference type="AGR" id="MGI:97535"/>
<dbReference type="MGI" id="MGI:97535">
    <property type="gene designation" value="Pdyn"/>
</dbReference>
<dbReference type="eggNOG" id="ENOG502RXT4">
    <property type="taxonomic scope" value="Eukaryota"/>
</dbReference>
<dbReference type="InParanoid" id="O35417"/>
<dbReference type="PhylomeDB" id="O35417"/>
<dbReference type="Reactome" id="R-MMU-111885">
    <property type="pathway name" value="Opioid Signalling"/>
</dbReference>
<dbReference type="Reactome" id="R-MMU-202040">
    <property type="pathway name" value="G-protein activation"/>
</dbReference>
<dbReference type="Reactome" id="R-MMU-375276">
    <property type="pathway name" value="Peptide ligand-binding receptors"/>
</dbReference>
<dbReference type="Reactome" id="R-MMU-418594">
    <property type="pathway name" value="G alpha (i) signalling events"/>
</dbReference>
<dbReference type="PRO" id="PR:O35417"/>
<dbReference type="Proteomes" id="UP000000589">
    <property type="component" value="Unplaced"/>
</dbReference>
<dbReference type="RNAct" id="O35417">
    <property type="molecule type" value="protein"/>
</dbReference>
<dbReference type="GO" id="GO:0005576">
    <property type="term" value="C:extracellular region"/>
    <property type="evidence" value="ECO:0007669"/>
    <property type="project" value="UniProtKB-SubCell"/>
</dbReference>
<dbReference type="GO" id="GO:0045202">
    <property type="term" value="C:synapse"/>
    <property type="evidence" value="ECO:0007669"/>
    <property type="project" value="GOC"/>
</dbReference>
<dbReference type="GO" id="GO:0005184">
    <property type="term" value="F:neuropeptide hormone activity"/>
    <property type="evidence" value="ECO:0000250"/>
    <property type="project" value="MGI"/>
</dbReference>
<dbReference type="GO" id="GO:0001515">
    <property type="term" value="F:opioid peptide activity"/>
    <property type="evidence" value="ECO:0007669"/>
    <property type="project" value="UniProtKB-KW"/>
</dbReference>
<dbReference type="GO" id="GO:0007268">
    <property type="term" value="P:chemical synaptic transmission"/>
    <property type="evidence" value="ECO:0007669"/>
    <property type="project" value="UniProtKB-KW"/>
</dbReference>
<dbReference type="GO" id="GO:0007218">
    <property type="term" value="P:neuropeptide signaling pathway"/>
    <property type="evidence" value="ECO:0007669"/>
    <property type="project" value="UniProtKB-KW"/>
</dbReference>
<dbReference type="InterPro" id="IPR006024">
    <property type="entry name" value="Opioid_neupept"/>
</dbReference>
<dbReference type="InterPro" id="IPR000750">
    <property type="entry name" value="Proenkphlin_B"/>
</dbReference>
<dbReference type="PANTHER" id="PTHR11438">
    <property type="entry name" value="PROENKEPHALIN"/>
    <property type="match status" value="1"/>
</dbReference>
<dbReference type="PANTHER" id="PTHR11438:SF4">
    <property type="entry name" value="PROENKEPHALIN-B"/>
    <property type="match status" value="1"/>
</dbReference>
<dbReference type="Pfam" id="PF01160">
    <property type="entry name" value="Opiods_neuropep"/>
    <property type="match status" value="1"/>
</dbReference>
<dbReference type="PRINTS" id="PR01028">
    <property type="entry name" value="OPIOIDPRCRSR"/>
</dbReference>
<dbReference type="PRINTS" id="PR01030">
    <property type="entry name" value="PENKBPRCRSR"/>
</dbReference>
<dbReference type="PROSITE" id="PS01252">
    <property type="entry name" value="OPIOIDS_PRECURSOR"/>
    <property type="match status" value="1"/>
</dbReference>
<protein>
    <recommendedName>
        <fullName>Proenkephalin-B</fullName>
    </recommendedName>
    <alternativeName>
        <fullName>Beta-neoendorphin-dynorphin</fullName>
    </alternativeName>
    <alternativeName>
        <fullName>Preprodynorphin</fullName>
    </alternativeName>
    <component>
        <recommendedName>
            <fullName>Alpha-neoendorphin</fullName>
        </recommendedName>
    </component>
    <component>
        <recommendedName>
            <fullName>Beta-neoendorphin</fullName>
        </recommendedName>
    </component>
    <component>
        <recommendedName>
            <fullName>Big dynorphin</fullName>
            <shortName>Big Dyn</shortName>
        </recommendedName>
    </component>
    <component>
        <recommendedName>
            <fullName>Dynorphin A(1-17)</fullName>
            <shortName>Dyn-A17</shortName>
            <shortName>Dynorphin A</shortName>
        </recommendedName>
    </component>
    <component>
        <recommendedName>
            <fullName>Dynorphin A(1-13)</fullName>
        </recommendedName>
    </component>
    <component>
        <recommendedName>
            <fullName>Dynorphin A(1-8)</fullName>
        </recommendedName>
    </component>
    <component>
        <recommendedName>
            <fullName>Leu-enkephalin</fullName>
        </recommendedName>
    </component>
    <component>
        <recommendedName>
            <fullName>Rimorphin</fullName>
        </recommendedName>
        <alternativeName>
            <fullName>Dynorphin B</fullName>
            <shortName>Dyn-B</shortName>
        </alternativeName>
        <alternativeName>
            <fullName>Dynorphin B(1-13)</fullName>
        </alternativeName>
    </component>
    <component>
        <recommendedName>
            <fullName>Leumorphin</fullName>
        </recommendedName>
        <alternativeName>
            <fullName>Dynorphin B-29</fullName>
        </alternativeName>
    </component>
</protein>
<reference key="1">
    <citation type="journal article" date="1998" name="Endocrinology">
        <title>Glucose stimulation of pancreatic beta-cell lines induces expression and secretion of dynorphin.</title>
        <authorList>
            <person name="Josefsen K."/>
            <person name="Buschard K."/>
            <person name="Sorensen L.R."/>
            <person name="Wollike M."/>
            <person name="Ekman R."/>
            <person name="Birkenbach M."/>
        </authorList>
    </citation>
    <scope>NUCLEOTIDE SEQUENCE [MRNA]</scope>
    <source>
        <strain>C57BL/6J</strain>
    </source>
</reference>
<reference key="2">
    <citation type="journal article" date="1985" name="J. Pharmacol. Exp. Ther.">
        <title>Dynorphin and neoendorphin peptides decrease dorsal root ganglion neuron calcium-dependent action potential duration.</title>
        <authorList>
            <person name="Werz M.A."/>
            <person name="Macdonald R.L."/>
        </authorList>
    </citation>
    <scope>FUNCTION</scope>
</reference>
<reference key="3">
    <citation type="journal article" date="2006" name="Neuropsychopharmacology">
        <title>Big dynorphin, a prodynorphin-derived peptide produces NMDA receptor-mediated effects on memory, anxiolytic-like and locomotor behavior in mice.</title>
        <authorList>
            <person name="Kuzmin A."/>
            <person name="Madjid N."/>
            <person name="Terenius L."/>
            <person name="Ogren S.O."/>
            <person name="Bakalkin G."/>
        </authorList>
    </citation>
    <scope>FUNCTION</scope>
</reference>
<proteinExistence type="evidence at transcript level"/>
<name>PDYN_MOUSE</name>
<evidence type="ECO:0000250" key="1"/>
<evidence type="ECO:0000255" key="2"/>
<evidence type="ECO:0000256" key="3">
    <source>
        <dbReference type="SAM" id="MobiDB-lite"/>
    </source>
</evidence>
<evidence type="ECO:0000305" key="4"/>
<sequence length="248" mass="28055">MAWSRLMLAACLLVMPSNVMADCLSLCSLCAVRIQDGPRPINPLICSLECQDLVPPSEEWETCRGFSSFLTLTVSGLRGKDDLEDEVALEEGISAHAKLLEPVLKELEKSRLLTSVPEEKFRGLSSSFGNGKESELAGADRMNDEAAQGRTVHFNEEDLRKQAKRYGGFLRKYPKRSSEMARDEDGGQDGDQVGHEDLYKRYGGFLRRIRPKLKWDNQKRYGGFLRRQFKVVTRSQENPNTYSEDLDV</sequence>